<dbReference type="EMBL" id="AL049711">
    <property type="protein sequence ID" value="CAB41335.1"/>
    <property type="status" value="ALT_SEQ"/>
    <property type="molecule type" value="Genomic_DNA"/>
</dbReference>
<dbReference type="EMBL" id="CP002686">
    <property type="protein sequence ID" value="AEE78903.1"/>
    <property type="molecule type" value="Genomic_DNA"/>
</dbReference>
<dbReference type="EMBL" id="CP002686">
    <property type="protein sequence ID" value="AEE78904.1"/>
    <property type="molecule type" value="Genomic_DNA"/>
</dbReference>
<dbReference type="EMBL" id="AY070427">
    <property type="protein sequence ID" value="AAL49922.1"/>
    <property type="molecule type" value="mRNA"/>
</dbReference>
<dbReference type="EMBL" id="AY133746">
    <property type="protein sequence ID" value="AAM91680.1"/>
    <property type="molecule type" value="mRNA"/>
</dbReference>
<dbReference type="EMBL" id="AK316998">
    <property type="protein sequence ID" value="BAH19693.1"/>
    <property type="molecule type" value="mRNA"/>
</dbReference>
<dbReference type="PIR" id="T49094">
    <property type="entry name" value="T49094"/>
</dbReference>
<dbReference type="RefSeq" id="NP_001030841.1">
    <property type="nucleotide sequence ID" value="NM_001035764.1"/>
</dbReference>
<dbReference type="RefSeq" id="NP_566958.3">
    <property type="nucleotide sequence ID" value="NM_115074.5"/>
</dbReference>
<dbReference type="SMR" id="Q8VYM4"/>
<dbReference type="FunCoup" id="Q8VYM4">
    <property type="interactions" value="1806"/>
</dbReference>
<dbReference type="STRING" id="3702.Q8VYM4"/>
<dbReference type="iPTMnet" id="Q8VYM4"/>
<dbReference type="MetOSite" id="Q8VYM4"/>
<dbReference type="PaxDb" id="3702-AT3G52150.1"/>
<dbReference type="ProteomicsDB" id="249370"/>
<dbReference type="EnsemblPlants" id="AT3G52150.1">
    <property type="protein sequence ID" value="AT3G52150.1"/>
    <property type="gene ID" value="AT3G52150"/>
</dbReference>
<dbReference type="EnsemblPlants" id="AT3G52150.2">
    <property type="protein sequence ID" value="AT3G52150.2"/>
    <property type="gene ID" value="AT3G52150"/>
</dbReference>
<dbReference type="GeneID" id="824379"/>
<dbReference type="Gramene" id="AT3G52150.1">
    <property type="protein sequence ID" value="AT3G52150.1"/>
    <property type="gene ID" value="AT3G52150"/>
</dbReference>
<dbReference type="Gramene" id="AT3G52150.2">
    <property type="protein sequence ID" value="AT3G52150.2"/>
    <property type="gene ID" value="AT3G52150"/>
</dbReference>
<dbReference type="KEGG" id="ath:AT3G52150"/>
<dbReference type="Araport" id="AT3G52150"/>
<dbReference type="TAIR" id="AT3G52150">
    <property type="gene designation" value="PSRP2"/>
</dbReference>
<dbReference type="eggNOG" id="KOG0118">
    <property type="taxonomic scope" value="Eukaryota"/>
</dbReference>
<dbReference type="HOGENOM" id="CLU_012062_15_1_1"/>
<dbReference type="InParanoid" id="Q8VYM4"/>
<dbReference type="OMA" id="DYAPERN"/>
<dbReference type="PhylomeDB" id="Q8VYM4"/>
<dbReference type="CD-CODE" id="4299E36E">
    <property type="entry name" value="Nucleolus"/>
</dbReference>
<dbReference type="PRO" id="PR:Q8VYM4"/>
<dbReference type="Proteomes" id="UP000006548">
    <property type="component" value="Chromosome 3"/>
</dbReference>
<dbReference type="ExpressionAtlas" id="Q8VYM4">
    <property type="expression patterns" value="baseline and differential"/>
</dbReference>
<dbReference type="GO" id="GO:0009507">
    <property type="term" value="C:chloroplast"/>
    <property type="evidence" value="ECO:0000314"/>
    <property type="project" value="UniProtKB"/>
</dbReference>
<dbReference type="GO" id="GO:0009941">
    <property type="term" value="C:chloroplast envelope"/>
    <property type="evidence" value="ECO:0007005"/>
    <property type="project" value="TAIR"/>
</dbReference>
<dbReference type="GO" id="GO:0009570">
    <property type="term" value="C:chloroplast stroma"/>
    <property type="evidence" value="ECO:0007005"/>
    <property type="project" value="TAIR"/>
</dbReference>
<dbReference type="GO" id="GO:0009535">
    <property type="term" value="C:chloroplast thylakoid membrane"/>
    <property type="evidence" value="ECO:0007005"/>
    <property type="project" value="TAIR"/>
</dbReference>
<dbReference type="GO" id="GO:0005829">
    <property type="term" value="C:cytosol"/>
    <property type="evidence" value="ECO:0007005"/>
    <property type="project" value="TAIR"/>
</dbReference>
<dbReference type="GO" id="GO:1990904">
    <property type="term" value="C:ribonucleoprotein complex"/>
    <property type="evidence" value="ECO:0007669"/>
    <property type="project" value="UniProtKB-KW"/>
</dbReference>
<dbReference type="GO" id="GO:0005840">
    <property type="term" value="C:ribosome"/>
    <property type="evidence" value="ECO:0007669"/>
    <property type="project" value="UniProtKB-KW"/>
</dbReference>
<dbReference type="GO" id="GO:0009579">
    <property type="term" value="C:thylakoid"/>
    <property type="evidence" value="ECO:0007005"/>
    <property type="project" value="TAIR"/>
</dbReference>
<dbReference type="GO" id="GO:0003729">
    <property type="term" value="F:mRNA binding"/>
    <property type="evidence" value="ECO:0000314"/>
    <property type="project" value="TAIR"/>
</dbReference>
<dbReference type="GO" id="GO:0003723">
    <property type="term" value="F:RNA binding"/>
    <property type="evidence" value="ECO:0000314"/>
    <property type="project" value="UniProtKB"/>
</dbReference>
<dbReference type="GO" id="GO:0019843">
    <property type="term" value="F:rRNA binding"/>
    <property type="evidence" value="ECO:0007669"/>
    <property type="project" value="UniProtKB-KW"/>
</dbReference>
<dbReference type="GO" id="GO:0003697">
    <property type="term" value="F:single-stranded DNA binding"/>
    <property type="evidence" value="ECO:0000314"/>
    <property type="project" value="UniProtKB"/>
</dbReference>
<dbReference type="GO" id="GO:1901001">
    <property type="term" value="P:negative regulation of response to salt stress"/>
    <property type="evidence" value="ECO:0000315"/>
    <property type="project" value="UniProtKB"/>
</dbReference>
<dbReference type="GO" id="GO:0080148">
    <property type="term" value="P:negative regulation of response to water deprivation"/>
    <property type="evidence" value="ECO:0000315"/>
    <property type="project" value="UniProtKB"/>
</dbReference>
<dbReference type="GO" id="GO:0010029">
    <property type="term" value="P:regulation of seed germination"/>
    <property type="evidence" value="ECO:0000315"/>
    <property type="project" value="UniProtKB"/>
</dbReference>
<dbReference type="GO" id="GO:1900140">
    <property type="term" value="P:regulation of seedling development"/>
    <property type="evidence" value="ECO:0000315"/>
    <property type="project" value="UniProtKB"/>
</dbReference>
<dbReference type="GO" id="GO:0009409">
    <property type="term" value="P:response to cold"/>
    <property type="evidence" value="ECO:0000315"/>
    <property type="project" value="UniProtKB"/>
</dbReference>
<dbReference type="GO" id="GO:0009651">
    <property type="term" value="P:response to salt stress"/>
    <property type="evidence" value="ECO:0000270"/>
    <property type="project" value="UniProtKB"/>
</dbReference>
<dbReference type="GO" id="GO:0009414">
    <property type="term" value="P:response to water deprivation"/>
    <property type="evidence" value="ECO:0000270"/>
    <property type="project" value="UniProtKB"/>
</dbReference>
<dbReference type="CDD" id="cd21609">
    <property type="entry name" value="RRM1_PSRP2_like"/>
    <property type="match status" value="1"/>
</dbReference>
<dbReference type="CDD" id="cd21610">
    <property type="entry name" value="RRM2_PSRP2"/>
    <property type="match status" value="1"/>
</dbReference>
<dbReference type="FunFam" id="3.30.70.330:FF:000401">
    <property type="entry name" value="30S ribosomal protein 2, chloroplastic"/>
    <property type="match status" value="1"/>
</dbReference>
<dbReference type="Gene3D" id="3.30.70.330">
    <property type="match status" value="2"/>
</dbReference>
<dbReference type="InterPro" id="IPR050502">
    <property type="entry name" value="Euk_RNA-bind_prot"/>
</dbReference>
<dbReference type="InterPro" id="IPR012677">
    <property type="entry name" value="Nucleotide-bd_a/b_plait_sf"/>
</dbReference>
<dbReference type="InterPro" id="IPR035979">
    <property type="entry name" value="RBD_domain_sf"/>
</dbReference>
<dbReference type="InterPro" id="IPR000504">
    <property type="entry name" value="RRM_dom"/>
</dbReference>
<dbReference type="PANTHER" id="PTHR48025">
    <property type="entry name" value="OS02G0815200 PROTEIN"/>
    <property type="match status" value="1"/>
</dbReference>
<dbReference type="PANTHER" id="PTHR48025:SF4">
    <property type="entry name" value="SMALL RIBOSOMAL SUBUNIT PROTEIN CS22"/>
    <property type="match status" value="1"/>
</dbReference>
<dbReference type="Pfam" id="PF00076">
    <property type="entry name" value="RRM_1"/>
    <property type="match status" value="2"/>
</dbReference>
<dbReference type="SMART" id="SM00360">
    <property type="entry name" value="RRM"/>
    <property type="match status" value="2"/>
</dbReference>
<dbReference type="SUPFAM" id="SSF54928">
    <property type="entry name" value="RNA-binding domain, RBD"/>
    <property type="match status" value="2"/>
</dbReference>
<dbReference type="PROSITE" id="PS50102">
    <property type="entry name" value="RRM"/>
    <property type="match status" value="2"/>
</dbReference>
<sequence>MATFLTNVVSIKPTIFSFQSESFTPLHTRVNVFSSKPFPSLAGTFSRSSRTRFIPYAVTETEEKPAALDPSSEAARRVYIGNIPRTVTNEQLTKLVEEHGAVEKVQVMYDKYSGRSRRFGFATMKSVEDANAVVEKLNGNTVEGREIKVNITEKPIASSPDLSVLQSEDSAFVDSPYKVYVGNLAKTVTKEMLENLFSEKGKVVSAKVSRVPGTSKSTGFGFVTFSSEEDVEAAIVALNNSLLEGQKIRVNKA</sequence>
<comment type="function">
    <text evidence="1 5">Component of the chloroplast ribosome (chloro-ribosome), a dedicated translation machinery responsible for the synthesis of chloroplast genome-encoded proteins, including proteins of the transcription and translation machinery and components of the photosynthetic apparatus. May have a role in the recruitment of stored chloroplast mRNAs for active protein synthesis (By similarity). Bind single strand DNA (ssDNA) and RNA in vitro. Exhibits RNA chaperone activity. Negatively regulates resistance responses to abiotic stresses during seed germination (e.g. salt, dehydration, and low temperature) and seedling growth (e.g. salt) (PubMed:24220572).</text>
</comment>
<comment type="subunit">
    <text evidence="1">Component of the chloroplast small ribosomal subunit (SSU). Mature 70S chloroplast ribosomes of higher plants consist of a small (30S) and a large (50S) subunit. The 30S small subunit contains 1 molecule of ribosomal RNA (16S rRNA) and 24 different proteins. The 50S large subunit contains 3 rRNA molecules (23S, 5S and 4.5S rRNA) and 33 different proteins.</text>
</comment>
<comment type="subcellular location">
    <subcellularLocation>
        <location evidence="4 5">Plastid</location>
        <location evidence="4 5">Chloroplast</location>
    </subcellularLocation>
</comment>
<comment type="tissue specificity">
    <text evidence="5">Expressed constitutively in roots, stems, flower buds, flowers and leaves.</text>
</comment>
<comment type="induction">
    <text evidence="5">Down-regulated under cold, salt and dehydration stress conditions.</text>
</comment>
<comment type="disruption phenotype">
    <text evidence="4 5">No detectable effects on ribosome biogenesis and translation in normal conditions (PubMed:21923745). Better seedling growth under salt stress conditions (PubMed:24220572).</text>
</comment>
<comment type="similarity">
    <text evidence="8">Belongs to the chloroplast-specific ribosomal protein cS22 family.</text>
</comment>
<comment type="sequence caution" evidence="8">
    <conflict type="erroneous gene model prediction">
        <sequence resource="EMBL-CDS" id="CAB41335"/>
    </conflict>
    <text>The predicted gene At3g52150 has been split into 2 genes: At3g52150 and At3g52155.</text>
</comment>
<feature type="transit peptide" description="Chloroplast" evidence="1">
    <location>
        <begin position="1"/>
        <end position="56"/>
    </location>
</feature>
<feature type="chain" id="PRO_0000441633" description="Small ribosomal subunit protein cS22" evidence="2">
    <location>
        <begin position="57"/>
        <end position="253"/>
    </location>
</feature>
<feature type="domain" description="RRM 1" evidence="3">
    <location>
        <begin position="76"/>
        <end position="154"/>
    </location>
</feature>
<feature type="domain" description="RRM 2" evidence="3">
    <location>
        <begin position="177"/>
        <end position="253"/>
    </location>
</feature>
<feature type="sequence conflict" description="In Ref. 4; BAH19693." evidence="8" ref="4">
    <original>T</original>
    <variation>S</variation>
    <location>
        <position position="88"/>
    </location>
</feature>
<feature type="sequence conflict" description="In Ref. 4; BAH19693." evidence="8" ref="4">
    <original>I</original>
    <variation>V</variation>
    <location>
        <position position="235"/>
    </location>
</feature>
<organism>
    <name type="scientific">Arabidopsis thaliana</name>
    <name type="common">Mouse-ear cress</name>
    <dbReference type="NCBI Taxonomy" id="3702"/>
    <lineage>
        <taxon>Eukaryota</taxon>
        <taxon>Viridiplantae</taxon>
        <taxon>Streptophyta</taxon>
        <taxon>Embryophyta</taxon>
        <taxon>Tracheophyta</taxon>
        <taxon>Spermatophyta</taxon>
        <taxon>Magnoliopsida</taxon>
        <taxon>eudicotyledons</taxon>
        <taxon>Gunneridae</taxon>
        <taxon>Pentapetalae</taxon>
        <taxon>rosids</taxon>
        <taxon>malvids</taxon>
        <taxon>Brassicales</taxon>
        <taxon>Brassicaceae</taxon>
        <taxon>Camelineae</taxon>
        <taxon>Arabidopsis</taxon>
    </lineage>
</organism>
<keyword id="KW-0143">Chaperone</keyword>
<keyword id="KW-0150">Chloroplast</keyword>
<keyword id="KW-0238">DNA-binding</keyword>
<keyword id="KW-0934">Plastid</keyword>
<keyword id="KW-1185">Reference proteome</keyword>
<keyword id="KW-0677">Repeat</keyword>
<keyword id="KW-0687">Ribonucleoprotein</keyword>
<keyword id="KW-0689">Ribosomal protein</keyword>
<keyword id="KW-0694">RNA-binding</keyword>
<keyword id="KW-0699">rRNA-binding</keyword>
<keyword id="KW-0346">Stress response</keyword>
<keyword id="KW-0809">Transit peptide</keyword>
<gene>
    <name evidence="6" type="primary">PSRP2</name>
    <name evidence="9" type="ordered locus">At3g52150</name>
    <name evidence="10" type="ORF">F4F15.260</name>
</gene>
<proteinExistence type="evidence at transcript level"/>
<evidence type="ECO:0000250" key="1">
    <source>
        <dbReference type="UniProtKB" id="P82277"/>
    </source>
</evidence>
<evidence type="ECO:0000255" key="2"/>
<evidence type="ECO:0000255" key="3">
    <source>
        <dbReference type="PROSITE-ProRule" id="PRU00176"/>
    </source>
</evidence>
<evidence type="ECO:0000269" key="4">
    <source>
    </source>
</evidence>
<evidence type="ECO:0000269" key="5">
    <source>
    </source>
</evidence>
<evidence type="ECO:0000303" key="6">
    <source>
    </source>
</evidence>
<evidence type="ECO:0000303" key="7">
    <source>
    </source>
</evidence>
<evidence type="ECO:0000305" key="8"/>
<evidence type="ECO:0000312" key="9">
    <source>
        <dbReference type="Araport" id="AT3G52150"/>
    </source>
</evidence>
<evidence type="ECO:0000312" key="10">
    <source>
        <dbReference type="EMBL" id="CAB41335.1"/>
    </source>
</evidence>
<reference key="1">
    <citation type="journal article" date="2000" name="Nature">
        <title>Sequence and analysis of chromosome 3 of the plant Arabidopsis thaliana.</title>
        <authorList>
            <person name="Salanoubat M."/>
            <person name="Lemcke K."/>
            <person name="Rieger M."/>
            <person name="Ansorge W."/>
            <person name="Unseld M."/>
            <person name="Fartmann B."/>
            <person name="Valle G."/>
            <person name="Bloecker H."/>
            <person name="Perez-Alonso M."/>
            <person name="Obermaier B."/>
            <person name="Delseny M."/>
            <person name="Boutry M."/>
            <person name="Grivell L.A."/>
            <person name="Mache R."/>
            <person name="Puigdomenech P."/>
            <person name="De Simone V."/>
            <person name="Choisne N."/>
            <person name="Artiguenave F."/>
            <person name="Robert C."/>
            <person name="Brottier P."/>
            <person name="Wincker P."/>
            <person name="Cattolico L."/>
            <person name="Weissenbach J."/>
            <person name="Saurin W."/>
            <person name="Quetier F."/>
            <person name="Schaefer M."/>
            <person name="Mueller-Auer S."/>
            <person name="Gabel C."/>
            <person name="Fuchs M."/>
            <person name="Benes V."/>
            <person name="Wurmbach E."/>
            <person name="Drzonek H."/>
            <person name="Erfle H."/>
            <person name="Jordan N."/>
            <person name="Bangert S."/>
            <person name="Wiedelmann R."/>
            <person name="Kranz H."/>
            <person name="Voss H."/>
            <person name="Holland R."/>
            <person name="Brandt P."/>
            <person name="Nyakatura G."/>
            <person name="Vezzi A."/>
            <person name="D'Angelo M."/>
            <person name="Pallavicini A."/>
            <person name="Toppo S."/>
            <person name="Simionati B."/>
            <person name="Conrad A."/>
            <person name="Hornischer K."/>
            <person name="Kauer G."/>
            <person name="Loehnert T.-H."/>
            <person name="Nordsiek G."/>
            <person name="Reichelt J."/>
            <person name="Scharfe M."/>
            <person name="Schoen O."/>
            <person name="Bargues M."/>
            <person name="Terol J."/>
            <person name="Climent J."/>
            <person name="Navarro P."/>
            <person name="Collado C."/>
            <person name="Perez-Perez A."/>
            <person name="Ottenwaelder B."/>
            <person name="Duchemin D."/>
            <person name="Cooke R."/>
            <person name="Laudie M."/>
            <person name="Berger-Llauro C."/>
            <person name="Purnelle B."/>
            <person name="Masuy D."/>
            <person name="de Haan M."/>
            <person name="Maarse A.C."/>
            <person name="Alcaraz J.-P."/>
            <person name="Cottet A."/>
            <person name="Casacuberta E."/>
            <person name="Monfort A."/>
            <person name="Argiriou A."/>
            <person name="Flores M."/>
            <person name="Liguori R."/>
            <person name="Vitale D."/>
            <person name="Mannhaupt G."/>
            <person name="Haase D."/>
            <person name="Schoof H."/>
            <person name="Rudd S."/>
            <person name="Zaccaria P."/>
            <person name="Mewes H.-W."/>
            <person name="Mayer K.F.X."/>
            <person name="Kaul S."/>
            <person name="Town C.D."/>
            <person name="Koo H.L."/>
            <person name="Tallon L.J."/>
            <person name="Jenkins J."/>
            <person name="Rooney T."/>
            <person name="Rizzo M."/>
            <person name="Walts A."/>
            <person name="Utterback T."/>
            <person name="Fujii C.Y."/>
            <person name="Shea T.P."/>
            <person name="Creasy T.H."/>
            <person name="Haas B."/>
            <person name="Maiti R."/>
            <person name="Wu D."/>
            <person name="Peterson J."/>
            <person name="Van Aken S."/>
            <person name="Pai G."/>
            <person name="Militscher J."/>
            <person name="Sellers P."/>
            <person name="Gill J.E."/>
            <person name="Feldblyum T.V."/>
            <person name="Preuss D."/>
            <person name="Lin X."/>
            <person name="Nierman W.C."/>
            <person name="Salzberg S.L."/>
            <person name="White O."/>
            <person name="Venter J.C."/>
            <person name="Fraser C.M."/>
            <person name="Kaneko T."/>
            <person name="Nakamura Y."/>
            <person name="Sato S."/>
            <person name="Kato T."/>
            <person name="Asamizu E."/>
            <person name="Sasamoto S."/>
            <person name="Kimura T."/>
            <person name="Idesawa K."/>
            <person name="Kawashima K."/>
            <person name="Kishida Y."/>
            <person name="Kiyokawa C."/>
            <person name="Kohara M."/>
            <person name="Matsumoto M."/>
            <person name="Matsuno A."/>
            <person name="Muraki A."/>
            <person name="Nakayama S."/>
            <person name="Nakazaki N."/>
            <person name="Shinpo S."/>
            <person name="Takeuchi C."/>
            <person name="Wada T."/>
            <person name="Watanabe A."/>
            <person name="Yamada M."/>
            <person name="Yasuda M."/>
            <person name="Tabata S."/>
        </authorList>
    </citation>
    <scope>NUCLEOTIDE SEQUENCE [LARGE SCALE GENOMIC DNA]</scope>
    <source>
        <strain>cv. Columbia</strain>
    </source>
</reference>
<reference key="2">
    <citation type="journal article" date="2017" name="Plant J.">
        <title>Araport11: a complete reannotation of the Arabidopsis thaliana reference genome.</title>
        <authorList>
            <person name="Cheng C.Y."/>
            <person name="Krishnakumar V."/>
            <person name="Chan A.P."/>
            <person name="Thibaud-Nissen F."/>
            <person name="Schobel S."/>
            <person name="Town C.D."/>
        </authorList>
    </citation>
    <scope>GENOME REANNOTATION</scope>
    <source>
        <strain>cv. Columbia</strain>
    </source>
</reference>
<reference key="3">
    <citation type="journal article" date="2003" name="Science">
        <title>Empirical analysis of transcriptional activity in the Arabidopsis genome.</title>
        <authorList>
            <person name="Yamada K."/>
            <person name="Lim J."/>
            <person name="Dale J.M."/>
            <person name="Chen H."/>
            <person name="Shinn P."/>
            <person name="Palm C.J."/>
            <person name="Southwick A.M."/>
            <person name="Wu H.C."/>
            <person name="Kim C.J."/>
            <person name="Nguyen M."/>
            <person name="Pham P.K."/>
            <person name="Cheuk R.F."/>
            <person name="Karlin-Newmann G."/>
            <person name="Liu S.X."/>
            <person name="Lam B."/>
            <person name="Sakano H."/>
            <person name="Wu T."/>
            <person name="Yu G."/>
            <person name="Miranda M."/>
            <person name="Quach H.L."/>
            <person name="Tripp M."/>
            <person name="Chang C.H."/>
            <person name="Lee J.M."/>
            <person name="Toriumi M.J."/>
            <person name="Chan M.M."/>
            <person name="Tang C.C."/>
            <person name="Onodera C.S."/>
            <person name="Deng J.M."/>
            <person name="Akiyama K."/>
            <person name="Ansari Y."/>
            <person name="Arakawa T."/>
            <person name="Banh J."/>
            <person name="Banno F."/>
            <person name="Bowser L."/>
            <person name="Brooks S.Y."/>
            <person name="Carninci P."/>
            <person name="Chao Q."/>
            <person name="Choy N."/>
            <person name="Enju A."/>
            <person name="Goldsmith A.D."/>
            <person name="Gurjal M."/>
            <person name="Hansen N.F."/>
            <person name="Hayashizaki Y."/>
            <person name="Johnson-Hopson C."/>
            <person name="Hsuan V.W."/>
            <person name="Iida K."/>
            <person name="Karnes M."/>
            <person name="Khan S."/>
            <person name="Koesema E."/>
            <person name="Ishida J."/>
            <person name="Jiang P.X."/>
            <person name="Jones T."/>
            <person name="Kawai J."/>
            <person name="Kamiya A."/>
            <person name="Meyers C."/>
            <person name="Nakajima M."/>
            <person name="Narusaka M."/>
            <person name="Seki M."/>
            <person name="Sakurai T."/>
            <person name="Satou M."/>
            <person name="Tamse R."/>
            <person name="Vaysberg M."/>
            <person name="Wallender E.K."/>
            <person name="Wong C."/>
            <person name="Yamamura Y."/>
            <person name="Yuan S."/>
            <person name="Shinozaki K."/>
            <person name="Davis R.W."/>
            <person name="Theologis A."/>
            <person name="Ecker J.R."/>
        </authorList>
    </citation>
    <scope>NUCLEOTIDE SEQUENCE [LARGE SCALE MRNA]</scope>
    <source>
        <strain>cv. Columbia</strain>
    </source>
</reference>
<reference key="4">
    <citation type="journal article" date="2009" name="DNA Res.">
        <title>Analysis of multiple occurrences of alternative splicing events in Arabidopsis thaliana using novel sequenced full-length cDNAs.</title>
        <authorList>
            <person name="Iida K."/>
            <person name="Fukami-Kobayashi K."/>
            <person name="Toyoda A."/>
            <person name="Sakaki Y."/>
            <person name="Kobayashi M."/>
            <person name="Seki M."/>
            <person name="Shinozaki K."/>
        </authorList>
    </citation>
    <scope>NUCLEOTIDE SEQUENCE [LARGE SCALE MRNA]</scope>
    <source>
        <strain>cv. Columbia</strain>
        <tissue>Flower</tissue>
        <tissue>Silique</tissue>
    </source>
</reference>
<reference key="5">
    <citation type="journal article" date="2003" name="Eur. J. Biochem.">
        <title>Proteomic identification of all plastid-specific ribosomal proteins in higher plant chloroplast 30S ribosomal subunit.</title>
        <authorList>
            <person name="Yamaguchi K."/>
            <person name="Subramanian A.R."/>
        </authorList>
    </citation>
    <scope>GENE FAMILY</scope>
    <scope>NOMENCLATURE</scope>
</reference>
<reference key="6">
    <citation type="journal article" date="2012" name="Plant J.">
        <title>The plastid-specific ribosomal proteins of Arabidopsis thaliana can be divided into non-essential proteins and genuine ribosomal proteins.</title>
        <authorList>
            <person name="Tiller N."/>
            <person name="Weingartner M."/>
            <person name="Thiele W."/>
            <person name="Maximova E."/>
            <person name="Schoettler M.A."/>
            <person name="Bock R."/>
        </authorList>
    </citation>
    <scope>DISRUPTION PHENOTYPE</scope>
    <scope>SUBCELLULAR LOCATION</scope>
    <scope>GENE FAMILY</scope>
</reference>
<reference key="7">
    <citation type="journal article" date="2013" name="Plant Physiol. Biochem.">
        <title>Functional characterization of a plastid-specific ribosomal protein PSRP2 in Arabidopsis thaliana under abiotic stress conditions.</title>
        <authorList>
            <person name="Xu T."/>
            <person name="Lee K."/>
            <person name="Gu L."/>
            <person name="Kim J.I."/>
            <person name="Kang H."/>
        </authorList>
    </citation>
    <scope>FUNCTION</scope>
    <scope>DISRUPTION PHENOTYPE</scope>
    <scope>TISSUE SPECIFICITY</scope>
    <scope>SUBCELLULAR LOCATION</scope>
    <scope>INDUCTION BY ABIOTIC STRESSES</scope>
    <source>
        <strain>cv. Columbia</strain>
    </source>
</reference>
<reference key="8">
    <citation type="journal article" date="2023" name="Plant Cell">
        <title>An updated nomenclature for plant ribosomal protein genes.</title>
        <authorList>
            <person name="Scarpin M.R."/>
            <person name="Busche M."/>
            <person name="Martinez R.E."/>
            <person name="Harper L.C."/>
            <person name="Reiser L."/>
            <person name="Szakonyi D."/>
            <person name="Merchante C."/>
            <person name="Lan T."/>
            <person name="Xiong W."/>
            <person name="Mo B."/>
            <person name="Tang G."/>
            <person name="Chen X."/>
            <person name="Bailey-Serres J."/>
            <person name="Browning K.S."/>
            <person name="Brunkard J.O."/>
        </authorList>
    </citation>
    <scope>NOMENCLATURE</scope>
</reference>
<name>PSRP2_ARATH</name>
<accession>Q8VYM4</accession>
<accession>B9DG26</accession>
<accession>Q9SUZ0</accession>
<protein>
    <recommendedName>
        <fullName evidence="7">Small ribosomal subunit protein cS22</fullName>
    </recommendedName>
    <alternativeName>
        <fullName evidence="6">30S ribosomal protein 2, chloroplastic</fullName>
    </alternativeName>
    <alternativeName>
        <fullName evidence="1">Chloroplastic small ribosomal subunit protein cS22</fullName>
    </alternativeName>
    <alternativeName>
        <fullName evidence="6">Plastid-specific 30S ribosomal protein 2, chloroplastic</fullName>
        <shortName evidence="6">PSRP-2</shortName>
    </alternativeName>
</protein>